<reference key="1">
    <citation type="journal article" date="1997" name="J. Bacteriol.">
        <title>Complete genome sequence of Methanobacterium thermoautotrophicum deltaH: functional analysis and comparative genomics.</title>
        <authorList>
            <person name="Smith D.R."/>
            <person name="Doucette-Stamm L.A."/>
            <person name="Deloughery C."/>
            <person name="Lee H.-M."/>
            <person name="Dubois J."/>
            <person name="Aldredge T."/>
            <person name="Bashirzadeh R."/>
            <person name="Blakely D."/>
            <person name="Cook R."/>
            <person name="Gilbert K."/>
            <person name="Harrison D."/>
            <person name="Hoang L."/>
            <person name="Keagle P."/>
            <person name="Lumm W."/>
            <person name="Pothier B."/>
            <person name="Qiu D."/>
            <person name="Spadafora R."/>
            <person name="Vicare R."/>
            <person name="Wang Y."/>
            <person name="Wierzbowski J."/>
            <person name="Gibson R."/>
            <person name="Jiwani N."/>
            <person name="Caruso A."/>
            <person name="Bush D."/>
            <person name="Safer H."/>
            <person name="Patwell D."/>
            <person name="Prabhakar S."/>
            <person name="McDougall S."/>
            <person name="Shimer G."/>
            <person name="Goyal A."/>
            <person name="Pietrovski S."/>
            <person name="Church G.M."/>
            <person name="Daniels C.J."/>
            <person name="Mao J.-I."/>
            <person name="Rice P."/>
            <person name="Noelling J."/>
            <person name="Reeve J.N."/>
        </authorList>
    </citation>
    <scope>NUCLEOTIDE SEQUENCE [LARGE SCALE GENOMIC DNA]</scope>
    <source>
        <strain>ATCC 29096 / DSM 1053 / JCM 10044 / NBRC 100330 / Delta H</strain>
    </source>
</reference>
<gene>
    <name evidence="1" type="primary">ogt</name>
    <name type="ordered locus">MTH_618</name>
</gene>
<dbReference type="EC" id="2.1.1.63" evidence="1"/>
<dbReference type="EMBL" id="AE000666">
    <property type="protein sequence ID" value="AAB85124.1"/>
    <property type="molecule type" value="Genomic_DNA"/>
</dbReference>
<dbReference type="PIR" id="B69182">
    <property type="entry name" value="B69182"/>
</dbReference>
<dbReference type="SMR" id="O26715"/>
<dbReference type="STRING" id="187420.MTH_618"/>
<dbReference type="PaxDb" id="187420-MTH_618"/>
<dbReference type="EnsemblBacteria" id="AAB85124">
    <property type="protein sequence ID" value="AAB85124"/>
    <property type="gene ID" value="MTH_618"/>
</dbReference>
<dbReference type="KEGG" id="mth:MTH_618"/>
<dbReference type="PATRIC" id="fig|187420.15.peg.599"/>
<dbReference type="HOGENOM" id="CLU_000445_52_2_2"/>
<dbReference type="InParanoid" id="O26715"/>
<dbReference type="Proteomes" id="UP000005223">
    <property type="component" value="Chromosome"/>
</dbReference>
<dbReference type="GO" id="GO:0005737">
    <property type="term" value="C:cytoplasm"/>
    <property type="evidence" value="ECO:0007669"/>
    <property type="project" value="UniProtKB-SubCell"/>
</dbReference>
<dbReference type="GO" id="GO:0003908">
    <property type="term" value="F:methylated-DNA-[protein]-cysteine S-methyltransferase activity"/>
    <property type="evidence" value="ECO:0007669"/>
    <property type="project" value="UniProtKB-UniRule"/>
</dbReference>
<dbReference type="GO" id="GO:0006307">
    <property type="term" value="P:DNA alkylation repair"/>
    <property type="evidence" value="ECO:0007669"/>
    <property type="project" value="UniProtKB-UniRule"/>
</dbReference>
<dbReference type="GO" id="GO:0032259">
    <property type="term" value="P:methylation"/>
    <property type="evidence" value="ECO:0007669"/>
    <property type="project" value="UniProtKB-KW"/>
</dbReference>
<dbReference type="CDD" id="cd06445">
    <property type="entry name" value="ATase"/>
    <property type="match status" value="1"/>
</dbReference>
<dbReference type="Gene3D" id="1.10.10.10">
    <property type="entry name" value="Winged helix-like DNA-binding domain superfamily/Winged helix DNA-binding domain"/>
    <property type="match status" value="1"/>
</dbReference>
<dbReference type="HAMAP" id="MF_00772">
    <property type="entry name" value="OGT"/>
    <property type="match status" value="1"/>
</dbReference>
<dbReference type="InterPro" id="IPR001497">
    <property type="entry name" value="MethylDNA_cys_MeTrfase_AS"/>
</dbReference>
<dbReference type="InterPro" id="IPR014048">
    <property type="entry name" value="MethylDNA_cys_MeTrfase_DNA-bd"/>
</dbReference>
<dbReference type="InterPro" id="IPR036217">
    <property type="entry name" value="MethylDNA_cys_MeTrfase_DNAb"/>
</dbReference>
<dbReference type="InterPro" id="IPR023546">
    <property type="entry name" value="MGMT"/>
</dbReference>
<dbReference type="InterPro" id="IPR036388">
    <property type="entry name" value="WH-like_DNA-bd_sf"/>
</dbReference>
<dbReference type="NCBIfam" id="TIGR00589">
    <property type="entry name" value="ogt"/>
    <property type="match status" value="1"/>
</dbReference>
<dbReference type="PANTHER" id="PTHR10815">
    <property type="entry name" value="METHYLATED-DNA--PROTEIN-CYSTEINE METHYLTRANSFERASE"/>
    <property type="match status" value="1"/>
</dbReference>
<dbReference type="PANTHER" id="PTHR10815:SF5">
    <property type="entry name" value="METHYLATED-DNA--PROTEIN-CYSTEINE METHYLTRANSFERASE"/>
    <property type="match status" value="1"/>
</dbReference>
<dbReference type="Pfam" id="PF01035">
    <property type="entry name" value="DNA_binding_1"/>
    <property type="match status" value="1"/>
</dbReference>
<dbReference type="SUPFAM" id="SSF46767">
    <property type="entry name" value="Methylated DNA-protein cysteine methyltransferase, C-terminal domain"/>
    <property type="match status" value="1"/>
</dbReference>
<dbReference type="PROSITE" id="PS00374">
    <property type="entry name" value="MGMT"/>
    <property type="match status" value="1"/>
</dbReference>
<organism>
    <name type="scientific">Methanothermobacter thermautotrophicus (strain ATCC 29096 / DSM 1053 / JCM 10044 / NBRC 100330 / Delta H)</name>
    <name type="common">Methanobacterium thermoautotrophicum</name>
    <dbReference type="NCBI Taxonomy" id="187420"/>
    <lineage>
        <taxon>Archaea</taxon>
        <taxon>Methanobacteriati</taxon>
        <taxon>Methanobacteriota</taxon>
        <taxon>Methanomada group</taxon>
        <taxon>Methanobacteria</taxon>
        <taxon>Methanobacteriales</taxon>
        <taxon>Methanobacteriaceae</taxon>
        <taxon>Methanothermobacter</taxon>
    </lineage>
</organism>
<protein>
    <recommendedName>
        <fullName evidence="1">Methylated-DNA--protein-cysteine methyltransferase</fullName>
        <ecNumber evidence="1">2.1.1.63</ecNumber>
    </recommendedName>
    <alternativeName>
        <fullName evidence="1">6-O-methylguanine-DNA methyltransferase</fullName>
        <shortName evidence="1">MGMT</shortName>
    </alternativeName>
    <alternativeName>
        <fullName evidence="1">O-6-methylguanine-DNA-alkyltransferase</fullName>
    </alternativeName>
</protein>
<keyword id="KW-0963">Cytoplasm</keyword>
<keyword id="KW-0227">DNA damage</keyword>
<keyword id="KW-0234">DNA repair</keyword>
<keyword id="KW-0489">Methyltransferase</keyword>
<keyword id="KW-1185">Reference proteome</keyword>
<keyword id="KW-0808">Transferase</keyword>
<name>OGT_METTH</name>
<feature type="chain" id="PRO_0000139380" description="Methylated-DNA--protein-cysteine methyltransferase">
    <location>
        <begin position="1"/>
        <end position="176"/>
    </location>
</feature>
<feature type="active site" description="Nucleophile; methyl group acceptor" evidence="1">
    <location>
        <position position="142"/>
    </location>
</feature>
<comment type="function">
    <text evidence="1">Involved in the cellular defense against the biological effects of O6-methylguanine (O6-MeG) and O4-methylthymine (O4-MeT) in DNA. Repairs the methylated nucleobase in DNA by stoichiometrically transferring the methyl group to a cysteine residue in the enzyme. This is a suicide reaction: the enzyme is irreversibly inactivated.</text>
</comment>
<comment type="catalytic activity">
    <reaction evidence="1">
        <text>a 6-O-methyl-2'-deoxyguanosine in DNA + L-cysteinyl-[protein] = S-methyl-L-cysteinyl-[protein] + a 2'-deoxyguanosine in DNA</text>
        <dbReference type="Rhea" id="RHEA:24000"/>
        <dbReference type="Rhea" id="RHEA-COMP:10131"/>
        <dbReference type="Rhea" id="RHEA-COMP:10132"/>
        <dbReference type="Rhea" id="RHEA-COMP:11367"/>
        <dbReference type="Rhea" id="RHEA-COMP:11368"/>
        <dbReference type="ChEBI" id="CHEBI:29950"/>
        <dbReference type="ChEBI" id="CHEBI:82612"/>
        <dbReference type="ChEBI" id="CHEBI:85445"/>
        <dbReference type="ChEBI" id="CHEBI:85448"/>
        <dbReference type="EC" id="2.1.1.63"/>
    </reaction>
</comment>
<comment type="catalytic activity">
    <reaction evidence="1">
        <text>a 4-O-methyl-thymidine in DNA + L-cysteinyl-[protein] = a thymidine in DNA + S-methyl-L-cysteinyl-[protein]</text>
        <dbReference type="Rhea" id="RHEA:53428"/>
        <dbReference type="Rhea" id="RHEA-COMP:10131"/>
        <dbReference type="Rhea" id="RHEA-COMP:10132"/>
        <dbReference type="Rhea" id="RHEA-COMP:13555"/>
        <dbReference type="Rhea" id="RHEA-COMP:13556"/>
        <dbReference type="ChEBI" id="CHEBI:29950"/>
        <dbReference type="ChEBI" id="CHEBI:82612"/>
        <dbReference type="ChEBI" id="CHEBI:137386"/>
        <dbReference type="ChEBI" id="CHEBI:137387"/>
        <dbReference type="EC" id="2.1.1.63"/>
    </reaction>
</comment>
<comment type="subcellular location">
    <subcellularLocation>
        <location evidence="1">Cytoplasm</location>
    </subcellularLocation>
</comment>
<comment type="miscellaneous">
    <text>This enzyme catalyzes only one turnover and therefore is not strictly catalytic. According to one definition, an enzyme is a biocatalyst that acts repeatedly and over many reaction cycles.</text>
</comment>
<comment type="similarity">
    <text evidence="1">Belongs to the MGMT family.</text>
</comment>
<accession>O26715</accession>
<proteinExistence type="inferred from homology"/>
<sequence length="176" mass="19264">MKQFECMYTLINIHEAETFKCMYTLMHPLIDIGVVWGDDGVTAIILLEGVKKYSNDSSPPMAIKKLLDSIRMFLDGCEVDFDLSVLDFGGCTEYQRRVLDVVSSIPRGSTLTYSEVAARAGGSPRSAAGALSRNPFPLVIPCHRVIRSDGNAGGYQGGVKLKKRLLEMEGVSLEGQ</sequence>
<evidence type="ECO:0000255" key="1">
    <source>
        <dbReference type="HAMAP-Rule" id="MF_00772"/>
    </source>
</evidence>